<protein>
    <recommendedName>
        <fullName>Diacylglycerol O-acyltransferase 2-like protein 6</fullName>
        <ecNumber evidence="2">2.3.1.-</ecNumber>
    </recommendedName>
</protein>
<gene>
    <name type="primary">Dgat2l6</name>
</gene>
<organism>
    <name type="scientific">Mus musculus</name>
    <name type="common">Mouse</name>
    <dbReference type="NCBI Taxonomy" id="10090"/>
    <lineage>
        <taxon>Eukaryota</taxon>
        <taxon>Metazoa</taxon>
        <taxon>Chordata</taxon>
        <taxon>Craniata</taxon>
        <taxon>Vertebrata</taxon>
        <taxon>Euteleostomi</taxon>
        <taxon>Mammalia</taxon>
        <taxon>Eutheria</taxon>
        <taxon>Euarchontoglires</taxon>
        <taxon>Glires</taxon>
        <taxon>Rodentia</taxon>
        <taxon>Myomorpha</taxon>
        <taxon>Muroidea</taxon>
        <taxon>Muridae</taxon>
        <taxon>Murinae</taxon>
        <taxon>Mus</taxon>
        <taxon>Mus</taxon>
    </lineage>
</organism>
<sequence length="337" mass="38362">MAAFSCLDLQEGLRTLSILQWIPVYVLLGTLSILGMPYLLLFTTLWPLSVLFLVWIAYDWNTHIQDGRRSAWVRNWTLWKYFQSYFPVKLVKTHDLSPKHNYIILSHPHGILSYGAFINFATESTGFSRVFPSITPFLATLEGIFWIPFVRDYLMSLGICPVSKLSLTHKLTQKDSGNAVIIVPGGASESLLSRPGVSMIYLKKRQGFVKLALKTGAYLVPSYSFGENETYNQETFAEGTWLRFFQKNIQKIGKRILGINLCTIHGRGLTRGSWGFLPFNHPITTVVGEPLPVPKIPDPDKETVEKYLELYISALRKLFDQHKAEYGLSKTHELKIL</sequence>
<comment type="function">
    <text evidence="2">Diglyceride acyltransferase that uses fatty acyl-CoA as substrate. Particularly active with oleate as a substrate. Has no wax synthase activity to produce wax esters.</text>
</comment>
<comment type="catalytic activity">
    <reaction evidence="2">
        <text>1,2-di-(9Z-octadecenoyl)-sn-glycerol + (9Z)-octadecenoyl-CoA = 1,2,3-tri-(9Z-octadecenoyl)-glycerol + CoA</text>
        <dbReference type="Rhea" id="RHEA:38219"/>
        <dbReference type="ChEBI" id="CHEBI:52333"/>
        <dbReference type="ChEBI" id="CHEBI:53753"/>
        <dbReference type="ChEBI" id="CHEBI:57287"/>
        <dbReference type="ChEBI" id="CHEBI:57387"/>
    </reaction>
</comment>
<comment type="subcellular location">
    <subcellularLocation>
        <location evidence="1">Endoplasmic reticulum membrane</location>
        <topology evidence="1">Multi-pass membrane protein</topology>
    </subcellularLocation>
</comment>
<comment type="similarity">
    <text evidence="4">Belongs to the diacylglycerol acyltransferase family.</text>
</comment>
<feature type="chain" id="PRO_0000320297" description="Diacylglycerol O-acyltransferase 2-like protein 6">
    <location>
        <begin position="1"/>
        <end position="337"/>
    </location>
</feature>
<feature type="transmembrane region" description="Helical" evidence="3">
    <location>
        <begin position="22"/>
        <end position="42"/>
    </location>
</feature>
<feature type="transmembrane region" description="Helical" evidence="3">
    <location>
        <begin position="102"/>
        <end position="122"/>
    </location>
</feature>
<name>DG2L6_MOUSE</name>
<proteinExistence type="inferred from homology"/>
<evidence type="ECO:0000250" key="1"/>
<evidence type="ECO:0000250" key="2">
    <source>
        <dbReference type="UniProtKB" id="Q6ZPD8"/>
    </source>
</evidence>
<evidence type="ECO:0000255" key="3"/>
<evidence type="ECO:0000305" key="4"/>
<keyword id="KW-0012">Acyltransferase</keyword>
<keyword id="KW-0256">Endoplasmic reticulum</keyword>
<keyword id="KW-0444">Lipid biosynthesis</keyword>
<keyword id="KW-0443">Lipid metabolism</keyword>
<keyword id="KW-0472">Membrane</keyword>
<keyword id="KW-1185">Reference proteome</keyword>
<keyword id="KW-0808">Transferase</keyword>
<keyword id="KW-0812">Transmembrane</keyword>
<keyword id="KW-1133">Transmembrane helix</keyword>
<reference key="1">
    <citation type="journal article" date="2009" name="PLoS Biol.">
        <title>Lineage-specific biology revealed by a finished genome assembly of the mouse.</title>
        <authorList>
            <person name="Church D.M."/>
            <person name="Goodstadt L."/>
            <person name="Hillier L.W."/>
            <person name="Zody M.C."/>
            <person name="Goldstein S."/>
            <person name="She X."/>
            <person name="Bult C.J."/>
            <person name="Agarwala R."/>
            <person name="Cherry J.L."/>
            <person name="DiCuccio M."/>
            <person name="Hlavina W."/>
            <person name="Kapustin Y."/>
            <person name="Meric P."/>
            <person name="Maglott D."/>
            <person name="Birtle Z."/>
            <person name="Marques A.C."/>
            <person name="Graves T."/>
            <person name="Zhou S."/>
            <person name="Teague B."/>
            <person name="Potamousis K."/>
            <person name="Churas C."/>
            <person name="Place M."/>
            <person name="Herschleb J."/>
            <person name="Runnheim R."/>
            <person name="Forrest D."/>
            <person name="Amos-Landgraf J."/>
            <person name="Schwartz D.C."/>
            <person name="Cheng Z."/>
            <person name="Lindblad-Toh K."/>
            <person name="Eichler E.E."/>
            <person name="Ponting C.P."/>
        </authorList>
    </citation>
    <scope>NUCLEOTIDE SEQUENCE [LARGE SCALE GENOMIC DNA]</scope>
    <source>
        <strain>C57BL/6J</strain>
    </source>
</reference>
<accession>A2ADU8</accession>
<dbReference type="EC" id="2.3.1.-" evidence="2"/>
<dbReference type="EMBL" id="AL671299">
    <property type="status" value="NOT_ANNOTATED_CDS"/>
    <property type="molecule type" value="Genomic_DNA"/>
</dbReference>
<dbReference type="CCDS" id="CCDS53147.1"/>
<dbReference type="RefSeq" id="NP_001107556.1">
    <property type="nucleotide sequence ID" value="NM_001114084.1"/>
</dbReference>
<dbReference type="SMR" id="A2ADU8"/>
<dbReference type="FunCoup" id="A2ADU8">
    <property type="interactions" value="141"/>
</dbReference>
<dbReference type="STRING" id="10090.ENSMUSP00000036845"/>
<dbReference type="iPTMnet" id="A2ADU8"/>
<dbReference type="PhosphoSitePlus" id="A2ADU8"/>
<dbReference type="PaxDb" id="10090-ENSMUSP00000036845"/>
<dbReference type="ProteomicsDB" id="277317"/>
<dbReference type="Antibodypedia" id="13248">
    <property type="antibodies" value="38 antibodies from 18 providers"/>
</dbReference>
<dbReference type="Ensembl" id="ENSMUST00000037541.9">
    <property type="protein sequence ID" value="ENSMUSP00000036845.9"/>
    <property type="gene ID" value="ENSMUSG00000067597.6"/>
</dbReference>
<dbReference type="GeneID" id="668257"/>
<dbReference type="KEGG" id="mmu:668257"/>
<dbReference type="UCSC" id="uc012hmt.1">
    <property type="organism name" value="mouse"/>
</dbReference>
<dbReference type="AGR" id="MGI:3045268"/>
<dbReference type="CTD" id="347516"/>
<dbReference type="MGI" id="MGI:3045268">
    <property type="gene designation" value="Dgat2l6"/>
</dbReference>
<dbReference type="VEuPathDB" id="HostDB:ENSMUSG00000067597"/>
<dbReference type="eggNOG" id="KOG0831">
    <property type="taxonomic scope" value="Eukaryota"/>
</dbReference>
<dbReference type="GeneTree" id="ENSGT01030000234582"/>
<dbReference type="HOGENOM" id="CLU_023995_0_0_1"/>
<dbReference type="InParanoid" id="A2ADU8"/>
<dbReference type="OMA" id="GTWIRFF"/>
<dbReference type="OrthoDB" id="264532at2759"/>
<dbReference type="PhylomeDB" id="A2ADU8"/>
<dbReference type="TreeFam" id="TF314707"/>
<dbReference type="Reactome" id="R-MMU-1482883">
    <property type="pathway name" value="Acyl chain remodeling of DAG and TAG"/>
</dbReference>
<dbReference type="BioGRID-ORCS" id="668257">
    <property type="hits" value="0 hits in 79 CRISPR screens"/>
</dbReference>
<dbReference type="PRO" id="PR:A2ADU8"/>
<dbReference type="Proteomes" id="UP000000589">
    <property type="component" value="Chromosome X"/>
</dbReference>
<dbReference type="RNAct" id="A2ADU8">
    <property type="molecule type" value="protein"/>
</dbReference>
<dbReference type="Bgee" id="ENSMUSG00000067597">
    <property type="expression patterns" value="Expressed in lip and 8 other cell types or tissues"/>
</dbReference>
<dbReference type="GO" id="GO:0005789">
    <property type="term" value="C:endoplasmic reticulum membrane"/>
    <property type="evidence" value="ECO:0007669"/>
    <property type="project" value="UniProtKB-SubCell"/>
</dbReference>
<dbReference type="GO" id="GO:0008374">
    <property type="term" value="F:O-acyltransferase activity"/>
    <property type="evidence" value="ECO:0007669"/>
    <property type="project" value="InterPro"/>
</dbReference>
<dbReference type="GO" id="GO:0006640">
    <property type="term" value="P:monoacylglycerol biosynthetic process"/>
    <property type="evidence" value="ECO:0007669"/>
    <property type="project" value="Ensembl"/>
</dbReference>
<dbReference type="CDD" id="cd07987">
    <property type="entry name" value="LPLAT_MGAT-like"/>
    <property type="match status" value="1"/>
</dbReference>
<dbReference type="InterPro" id="IPR007130">
    <property type="entry name" value="DAGAT"/>
</dbReference>
<dbReference type="PANTHER" id="PTHR12317">
    <property type="entry name" value="DIACYLGLYCEROL O-ACYLTRANSFERASE"/>
    <property type="match status" value="1"/>
</dbReference>
<dbReference type="PANTHER" id="PTHR12317:SF19">
    <property type="entry name" value="DIACYLGLYCEROL O-ACYLTRANSFERASE 2-LIKE PROTEIN 6"/>
    <property type="match status" value="1"/>
</dbReference>
<dbReference type="Pfam" id="PF03982">
    <property type="entry name" value="DAGAT"/>
    <property type="match status" value="1"/>
</dbReference>
<dbReference type="SUPFAM" id="SSF69593">
    <property type="entry name" value="Glycerol-3-phosphate (1)-acyltransferase"/>
    <property type="match status" value="1"/>
</dbReference>